<sequence length="158" mass="18080">MAKATVVKKHNGGTIAQNKRARHDYFIEEKFEAGMSLLGWEVKSLRAGRMSLTESYVIFKNGEAFLFGAQIQPLLSASTHIVPEATRTRKLLLSRRELEKLMGAVNQKGYSCVPLACYWKGHLVKLEIALVKGKQLHDKRATEKERDWQRDKARIFHK</sequence>
<gene>
    <name evidence="1" type="primary">smpB</name>
    <name type="ordered locus">A1S_0844</name>
</gene>
<keyword id="KW-0963">Cytoplasm</keyword>
<keyword id="KW-0694">RNA-binding</keyword>
<accession>A3M2Y4</accession>
<comment type="function">
    <text evidence="1">Required for rescue of stalled ribosomes mediated by trans-translation. Binds to transfer-messenger RNA (tmRNA), required for stable association of tmRNA with ribosomes. tmRNA and SmpB together mimic tRNA shape, replacing the anticodon stem-loop with SmpB. tmRNA is encoded by the ssrA gene; the 2 termini fold to resemble tRNA(Ala) and it encodes a 'tag peptide', a short internal open reading frame. During trans-translation Ala-aminoacylated tmRNA acts like a tRNA, entering the A-site of stalled ribosomes, displacing the stalled mRNA. The ribosome then switches to translate the ORF on the tmRNA; the nascent peptide is terminated with the 'tag peptide' encoded by the tmRNA and targeted for degradation. The ribosome is freed to recommence translation, which seems to be the essential function of trans-translation.</text>
</comment>
<comment type="subcellular location">
    <subcellularLocation>
        <location evidence="1">Cytoplasm</location>
    </subcellularLocation>
    <text evidence="1">The tmRNA-SmpB complex associates with stalled 70S ribosomes.</text>
</comment>
<comment type="similarity">
    <text evidence="1">Belongs to the SmpB family.</text>
</comment>
<evidence type="ECO:0000255" key="1">
    <source>
        <dbReference type="HAMAP-Rule" id="MF_00023"/>
    </source>
</evidence>
<name>SSRP_ACIBT</name>
<organism>
    <name type="scientific">Acinetobacter baumannii (strain ATCC 17978 / DSM 105126 / CIP 53.77 / LMG 1025 / NCDC KC755 / 5377)</name>
    <dbReference type="NCBI Taxonomy" id="400667"/>
    <lineage>
        <taxon>Bacteria</taxon>
        <taxon>Pseudomonadati</taxon>
        <taxon>Pseudomonadota</taxon>
        <taxon>Gammaproteobacteria</taxon>
        <taxon>Moraxellales</taxon>
        <taxon>Moraxellaceae</taxon>
        <taxon>Acinetobacter</taxon>
        <taxon>Acinetobacter calcoaceticus/baumannii complex</taxon>
    </lineage>
</organism>
<feature type="chain" id="PRO_1000090130" description="SsrA-binding protein">
    <location>
        <begin position="1"/>
        <end position="158"/>
    </location>
</feature>
<protein>
    <recommendedName>
        <fullName evidence="1">SsrA-binding protein</fullName>
    </recommendedName>
    <alternativeName>
        <fullName evidence="1">Small protein B</fullName>
    </alternativeName>
</protein>
<proteinExistence type="inferred from homology"/>
<dbReference type="EMBL" id="CP000521">
    <property type="protein sequence ID" value="ABO11278.2"/>
    <property type="molecule type" value="Genomic_DNA"/>
</dbReference>
<dbReference type="RefSeq" id="WP_001029798.1">
    <property type="nucleotide sequence ID" value="NZ_CP053098.1"/>
</dbReference>
<dbReference type="SMR" id="A3M2Y4"/>
<dbReference type="GeneID" id="92892774"/>
<dbReference type="KEGG" id="acb:A1S_0844"/>
<dbReference type="HOGENOM" id="CLU_108953_3_0_6"/>
<dbReference type="GO" id="GO:0005829">
    <property type="term" value="C:cytosol"/>
    <property type="evidence" value="ECO:0007669"/>
    <property type="project" value="TreeGrafter"/>
</dbReference>
<dbReference type="GO" id="GO:0003723">
    <property type="term" value="F:RNA binding"/>
    <property type="evidence" value="ECO:0007669"/>
    <property type="project" value="UniProtKB-UniRule"/>
</dbReference>
<dbReference type="GO" id="GO:0070929">
    <property type="term" value="P:trans-translation"/>
    <property type="evidence" value="ECO:0007669"/>
    <property type="project" value="UniProtKB-UniRule"/>
</dbReference>
<dbReference type="CDD" id="cd09294">
    <property type="entry name" value="SmpB"/>
    <property type="match status" value="1"/>
</dbReference>
<dbReference type="Gene3D" id="2.40.280.10">
    <property type="match status" value="1"/>
</dbReference>
<dbReference type="HAMAP" id="MF_00023">
    <property type="entry name" value="SmpB"/>
    <property type="match status" value="1"/>
</dbReference>
<dbReference type="InterPro" id="IPR023620">
    <property type="entry name" value="SmpB"/>
</dbReference>
<dbReference type="InterPro" id="IPR000037">
    <property type="entry name" value="SsrA-bd_prot"/>
</dbReference>
<dbReference type="InterPro" id="IPR020081">
    <property type="entry name" value="SsrA-bd_prot_CS"/>
</dbReference>
<dbReference type="NCBIfam" id="NF003843">
    <property type="entry name" value="PRK05422.1"/>
    <property type="match status" value="1"/>
</dbReference>
<dbReference type="NCBIfam" id="TIGR00086">
    <property type="entry name" value="smpB"/>
    <property type="match status" value="1"/>
</dbReference>
<dbReference type="PANTHER" id="PTHR30308:SF2">
    <property type="entry name" value="SSRA-BINDING PROTEIN"/>
    <property type="match status" value="1"/>
</dbReference>
<dbReference type="PANTHER" id="PTHR30308">
    <property type="entry name" value="TMRNA-BINDING COMPONENT OF TRANS-TRANSLATION TAGGING COMPLEX"/>
    <property type="match status" value="1"/>
</dbReference>
<dbReference type="Pfam" id="PF01668">
    <property type="entry name" value="SmpB"/>
    <property type="match status" value="1"/>
</dbReference>
<dbReference type="SUPFAM" id="SSF74982">
    <property type="entry name" value="Small protein B (SmpB)"/>
    <property type="match status" value="1"/>
</dbReference>
<dbReference type="PROSITE" id="PS01317">
    <property type="entry name" value="SSRP"/>
    <property type="match status" value="1"/>
</dbReference>
<reference key="1">
    <citation type="journal article" date="2007" name="Genes Dev.">
        <title>New insights into Acinetobacter baumannii pathogenesis revealed by high-density pyrosequencing and transposon mutagenesis.</title>
        <authorList>
            <person name="Smith M.G."/>
            <person name="Gianoulis T.A."/>
            <person name="Pukatzki S."/>
            <person name="Mekalanos J.J."/>
            <person name="Ornston L.N."/>
            <person name="Gerstein M."/>
            <person name="Snyder M."/>
        </authorList>
    </citation>
    <scope>NUCLEOTIDE SEQUENCE [LARGE SCALE GENOMIC DNA]</scope>
    <source>
        <strain>ATCC 17978 / DSM 105126 / CIP 53.77 / LMG 1025 / NCDC KC755 / 5377</strain>
    </source>
</reference>